<accession>Q91ZA8</accession>
<accession>Q80UV7</accession>
<accession>Q9CZM1</accession>
<sequence length="114" mass="12492">MSQAELSTCSAPQTQRIFQEAVRKGNTQELQSLLQNMTNCEFNVNSFGPEGQTALHQSVIDGNLELVKLLVKFGADIRLANRDGWSALHIAAFGGHQDIVLYLITKAKYAASGR</sequence>
<comment type="function">
    <text evidence="1 2 3 4 6 7 11">Downstream effector of Notch signaling. Involved in the regulation of liver cancer cells self-renewal (By similarity). Involved in the regulation of canonical Wnt signaling by stabilizing LEF1 (By similarity). Involved in angiogenesis acting downstream of Notch at branch points to regulate vascular density. Proposed to integrate endothelial Notch and Wnt signaling to control stalk cell proliferation and to stablilize new endothelial connections during angiogenesis (PubMed:19154719). During somitogenesis involved in maintenance of proper somite segmentation and proper numbers of somites and vertebrae. Required for proper anterior-posterior somite patterning. Proposed to function in a negative feedback loop to destabilize Notch 1 intracellular domain (NICD) and down-regulate the Notch signal, preventing expansion of the Notch signal into the anterior somite domain (PubMed:21795391, PubMed:21998026).</text>
</comment>
<comment type="subunit">
    <text evidence="4">Interacts with LEF1.</text>
</comment>
<comment type="alternative products">
    <event type="alternative splicing"/>
    <isoform>
        <id>Q91ZA8-1</id>
        <name>1</name>
        <sequence type="displayed"/>
    </isoform>
    <isoform>
        <id>Q91ZA8-2</id>
        <name>2</name>
        <sequence type="described" ref="VSP_032380 VSP_032381"/>
    </isoform>
</comment>
<comment type="tissue specificity">
    <text evidence="3 4 8">Expressed at high levels in the brain, heart, colon, kidney, liver, lung and small intestine. Expressed in retina, most prominent in endothelial cells at the migrating point of the vasculature behind leading tip cells. Expressed in testis.</text>
</comment>
<comment type="developmental stage">
    <text evidence="3 4 5">During embryogenesis, expressed in several tissues in which cellular differentiation is regulated by the notch signaling pathway. At 10.5 dpc expressed in intersomatic vessels and in vessels of the limb buds with strongest expression at vascular branch points. Cyclic expression between 8.5 dpc and 10.5 dpc somitogenesis is dependent on DLL3.</text>
</comment>
<comment type="induction">
    <text evidence="3">By Notch signaling via a CBF1/Su(H)/Lag-1 (CSL)-dependent pathway.</text>
</comment>
<comment type="disruption phenotype">
    <text evidence="4 6 7">Axial skeletal defects in newborn mice such as rib fusions, fused vertebral bodies and fused pedicles of the vertebrae; defects are influenced by the strain-specific genetic background. Embryos exhibit expansion and fusion of myotomes, dorsal root ganglia fusions and defects in projection of the spinal nerves. Embryos show increased level of Notch 1 intracellular domain (NICD) expression in presomitic mesoderm and somites (PubMed:21998026). In contrast, fewer somites and vertebrae found in -/- are linked to a longer segmentation clock period (PubMed:21795391). Defects in the radial expansion of the vascular plexus from the optic nerve head to the periphery, reduction of retinal vessel density; however, most of the defects in angiogenesis resolve over time (PubMed:19154719).</text>
</comment>
<comment type="similarity">
    <text evidence="10">Belongs to the NRARP family.</text>
</comment>
<organism>
    <name type="scientific">Mus musculus</name>
    <name type="common">Mouse</name>
    <dbReference type="NCBI Taxonomy" id="10090"/>
    <lineage>
        <taxon>Eukaryota</taxon>
        <taxon>Metazoa</taxon>
        <taxon>Chordata</taxon>
        <taxon>Craniata</taxon>
        <taxon>Vertebrata</taxon>
        <taxon>Euteleostomi</taxon>
        <taxon>Mammalia</taxon>
        <taxon>Eutheria</taxon>
        <taxon>Euarchontoglires</taxon>
        <taxon>Glires</taxon>
        <taxon>Rodentia</taxon>
        <taxon>Myomorpha</taxon>
        <taxon>Muroidea</taxon>
        <taxon>Muridae</taxon>
        <taxon>Murinae</taxon>
        <taxon>Mus</taxon>
        <taxon>Mus</taxon>
    </lineage>
</organism>
<keyword id="KW-0025">Alternative splicing</keyword>
<keyword id="KW-0040">ANK repeat</keyword>
<keyword id="KW-0217">Developmental protein</keyword>
<keyword id="KW-1185">Reference proteome</keyword>
<keyword id="KW-0677">Repeat</keyword>
<gene>
    <name type="primary">Nrarp</name>
</gene>
<proteinExistence type="evidence at protein level"/>
<feature type="chain" id="PRO_0000325080" description="Notch-regulated ankyrin repeat-containing protein">
    <location>
        <begin position="1"/>
        <end position="114"/>
    </location>
</feature>
<feature type="repeat" description="ANK 1">
    <location>
        <begin position="50"/>
        <end position="79"/>
    </location>
</feature>
<feature type="repeat" description="ANK 2">
    <location>
        <begin position="83"/>
        <end position="112"/>
    </location>
</feature>
<feature type="splice variant" id="VSP_032380" description="In isoform 2." evidence="9">
    <original>LA</original>
    <variation>RS</variation>
    <location>
        <begin position="79"/>
        <end position="80"/>
    </location>
</feature>
<feature type="splice variant" id="VSP_032381" description="In isoform 2." evidence="9">
    <location>
        <begin position="81"/>
        <end position="114"/>
    </location>
</feature>
<evidence type="ECO:0000250" key="1">
    <source>
        <dbReference type="UniProtKB" id="Q7T3Y0"/>
    </source>
</evidence>
<evidence type="ECO:0000250" key="2">
    <source>
        <dbReference type="UniProtKB" id="Q7Z6K4"/>
    </source>
</evidence>
<evidence type="ECO:0000269" key="3">
    <source>
    </source>
</evidence>
<evidence type="ECO:0000269" key="4">
    <source>
    </source>
</evidence>
<evidence type="ECO:0000269" key="5">
    <source>
    </source>
</evidence>
<evidence type="ECO:0000269" key="6">
    <source>
    </source>
</evidence>
<evidence type="ECO:0000269" key="7">
    <source>
    </source>
</evidence>
<evidence type="ECO:0000269" key="8">
    <source>
    </source>
</evidence>
<evidence type="ECO:0000303" key="9">
    <source>
    </source>
</evidence>
<evidence type="ECO:0000305" key="10"/>
<evidence type="ECO:0000305" key="11">
    <source>
    </source>
</evidence>
<name>NRARP_MOUSE</name>
<dbReference type="EMBL" id="AY046077">
    <property type="protein sequence ID" value="AAL05944.1"/>
    <property type="molecule type" value="mRNA"/>
</dbReference>
<dbReference type="EMBL" id="AK012426">
    <property type="protein sequence ID" value="BAB28231.1"/>
    <property type="status" value="ALT_SEQ"/>
    <property type="molecule type" value="mRNA"/>
</dbReference>
<dbReference type="EMBL" id="AL732309">
    <property type="status" value="NOT_ANNOTATED_CDS"/>
    <property type="molecule type" value="Genomic_DNA"/>
</dbReference>
<dbReference type="EMBL" id="BC048088">
    <property type="protein sequence ID" value="AAH48088.1"/>
    <property type="molecule type" value="mRNA"/>
</dbReference>
<dbReference type="EMBL" id="BC069891">
    <property type="protein sequence ID" value="AAH69891.1"/>
    <property type="molecule type" value="mRNA"/>
</dbReference>
<dbReference type="CCDS" id="CCDS38066.1">
    <molecule id="Q91ZA8-1"/>
</dbReference>
<dbReference type="RefSeq" id="NP_080256.2">
    <molecule id="Q91ZA8-1"/>
    <property type="nucleotide sequence ID" value="NM_025980.2"/>
</dbReference>
<dbReference type="SMR" id="Q91ZA8"/>
<dbReference type="FunCoup" id="Q91ZA8">
    <property type="interactions" value="67"/>
</dbReference>
<dbReference type="IntAct" id="Q91ZA8">
    <property type="interactions" value="1"/>
</dbReference>
<dbReference type="STRING" id="10090.ENSMUSP00000100615"/>
<dbReference type="PhosphoSitePlus" id="Q91ZA8"/>
<dbReference type="PaxDb" id="10090-ENSMUSP00000100615"/>
<dbReference type="Antibodypedia" id="19006">
    <property type="antibodies" value="149 antibodies from 26 providers"/>
</dbReference>
<dbReference type="DNASU" id="67122"/>
<dbReference type="Ensembl" id="ENSMUST00000104999.4">
    <molecule id="Q91ZA8-1"/>
    <property type="protein sequence ID" value="ENSMUSP00000100615.3"/>
    <property type="gene ID" value="ENSMUSG00000078202.4"/>
</dbReference>
<dbReference type="GeneID" id="67122"/>
<dbReference type="KEGG" id="mmu:67122"/>
<dbReference type="UCSC" id="uc008iqk.1">
    <molecule id="Q91ZA8-1"/>
    <property type="organism name" value="mouse"/>
</dbReference>
<dbReference type="AGR" id="MGI:1914372"/>
<dbReference type="CTD" id="441478"/>
<dbReference type="MGI" id="MGI:1914372">
    <property type="gene designation" value="Nrarp"/>
</dbReference>
<dbReference type="VEuPathDB" id="HostDB:ENSMUSG00000078202"/>
<dbReference type="eggNOG" id="KOG0505">
    <property type="taxonomic scope" value="Eukaryota"/>
</dbReference>
<dbReference type="GeneTree" id="ENSGT00940000161928"/>
<dbReference type="HOGENOM" id="CLU_000134_41_1_1"/>
<dbReference type="InParanoid" id="Q91ZA8"/>
<dbReference type="OMA" id="MRTETAH"/>
<dbReference type="OrthoDB" id="5314041at2759"/>
<dbReference type="PhylomeDB" id="Q91ZA8"/>
<dbReference type="BioGRID-ORCS" id="67122">
    <property type="hits" value="1 hit in 76 CRISPR screens"/>
</dbReference>
<dbReference type="ChiTaRS" id="Nrarp">
    <property type="organism name" value="mouse"/>
</dbReference>
<dbReference type="PRO" id="PR:Q91ZA8"/>
<dbReference type="Proteomes" id="UP000000589">
    <property type="component" value="Chromosome 2"/>
</dbReference>
<dbReference type="RNAct" id="Q91ZA8">
    <property type="molecule type" value="protein"/>
</dbReference>
<dbReference type="Bgee" id="ENSMUSG00000078202">
    <property type="expression patterns" value="Expressed in paraxial mesoderm and 243 other cell types or tissues"/>
</dbReference>
<dbReference type="GO" id="GO:0002043">
    <property type="term" value="P:blood vessel endothelial cell proliferation involved in sprouting angiogenesis"/>
    <property type="evidence" value="ECO:0000315"/>
    <property type="project" value="MGI"/>
</dbReference>
<dbReference type="GO" id="GO:0001569">
    <property type="term" value="P:branching involved in blood vessel morphogenesis"/>
    <property type="evidence" value="ECO:0000315"/>
    <property type="project" value="MGI"/>
</dbReference>
<dbReference type="GO" id="GO:0001935">
    <property type="term" value="P:endothelial cell proliferation"/>
    <property type="evidence" value="ECO:0000315"/>
    <property type="project" value="MGI"/>
</dbReference>
<dbReference type="GO" id="GO:0045746">
    <property type="term" value="P:negative regulation of Notch signaling pathway"/>
    <property type="evidence" value="ECO:0000315"/>
    <property type="project" value="MGI"/>
</dbReference>
<dbReference type="GO" id="GO:0045581">
    <property type="term" value="P:negative regulation of T cell differentiation"/>
    <property type="evidence" value="ECO:0000314"/>
    <property type="project" value="MGI"/>
</dbReference>
<dbReference type="GO" id="GO:0000122">
    <property type="term" value="P:negative regulation of transcription by RNA polymerase II"/>
    <property type="evidence" value="ECO:0000316"/>
    <property type="project" value="MGI"/>
</dbReference>
<dbReference type="GO" id="GO:0007219">
    <property type="term" value="P:Notch signaling pathway"/>
    <property type="evidence" value="ECO:0000315"/>
    <property type="project" value="MGI"/>
</dbReference>
<dbReference type="GO" id="GO:0090263">
    <property type="term" value="P:positive regulation of canonical Wnt signaling pathway"/>
    <property type="evidence" value="ECO:0000266"/>
    <property type="project" value="MGI"/>
</dbReference>
<dbReference type="GO" id="GO:1905564">
    <property type="term" value="P:positive regulation of vascular endothelial cell proliferation"/>
    <property type="evidence" value="ECO:0000315"/>
    <property type="project" value="MGI"/>
</dbReference>
<dbReference type="GO" id="GO:0022407">
    <property type="term" value="P:regulation of cell-cell adhesion"/>
    <property type="evidence" value="ECO:0000315"/>
    <property type="project" value="MGI"/>
</dbReference>
<dbReference type="GO" id="GO:0032525">
    <property type="term" value="P:somite rostral/caudal axis specification"/>
    <property type="evidence" value="ECO:0000315"/>
    <property type="project" value="MGI"/>
</dbReference>
<dbReference type="GO" id="GO:0002040">
    <property type="term" value="P:sprouting angiogenesis"/>
    <property type="evidence" value="ECO:0000315"/>
    <property type="project" value="MGI"/>
</dbReference>
<dbReference type="GO" id="GO:0030217">
    <property type="term" value="P:T cell differentiation"/>
    <property type="evidence" value="ECO:0000314"/>
    <property type="project" value="MGI"/>
</dbReference>
<dbReference type="GO" id="GO:0101023">
    <property type="term" value="P:vascular endothelial cell proliferation"/>
    <property type="evidence" value="ECO:0000315"/>
    <property type="project" value="MGI"/>
</dbReference>
<dbReference type="FunFam" id="1.25.40.20:FF:000085">
    <property type="entry name" value="Notch-regulated ankyrin repeat-containing protein A"/>
    <property type="match status" value="1"/>
</dbReference>
<dbReference type="Gene3D" id="1.25.40.20">
    <property type="entry name" value="Ankyrin repeat-containing domain"/>
    <property type="match status" value="1"/>
</dbReference>
<dbReference type="InterPro" id="IPR002110">
    <property type="entry name" value="Ankyrin_rpt"/>
</dbReference>
<dbReference type="InterPro" id="IPR036770">
    <property type="entry name" value="Ankyrin_rpt-contain_sf"/>
</dbReference>
<dbReference type="InterPro" id="IPR051226">
    <property type="entry name" value="PP1_Regulatory_Subunit"/>
</dbReference>
<dbReference type="PANTHER" id="PTHR24179:SF21">
    <property type="entry name" value="MYOSIN BINDING SUBUNIT, ISOFORM O"/>
    <property type="match status" value="1"/>
</dbReference>
<dbReference type="PANTHER" id="PTHR24179">
    <property type="entry name" value="PROTEIN PHOSPHATASE 1 REGULATORY SUBUNIT 12"/>
    <property type="match status" value="1"/>
</dbReference>
<dbReference type="Pfam" id="PF12796">
    <property type="entry name" value="Ank_2"/>
    <property type="match status" value="1"/>
</dbReference>
<dbReference type="SMART" id="SM00248">
    <property type="entry name" value="ANK"/>
    <property type="match status" value="2"/>
</dbReference>
<dbReference type="SUPFAM" id="SSF48403">
    <property type="entry name" value="Ankyrin repeat"/>
    <property type="match status" value="1"/>
</dbReference>
<dbReference type="PROSITE" id="PS50297">
    <property type="entry name" value="ANK_REP_REGION"/>
    <property type="match status" value="1"/>
</dbReference>
<dbReference type="PROSITE" id="PS50088">
    <property type="entry name" value="ANK_REPEAT"/>
    <property type="match status" value="2"/>
</dbReference>
<protein>
    <recommendedName>
        <fullName>Notch-regulated ankyrin repeat-containing protein</fullName>
    </recommendedName>
</protein>
<reference key="1">
    <citation type="journal article" date="2001" name="Dev. Biol.">
        <title>The Nrarp gene encodes an ankyrin-repeat protein that is transcriptionally regulated by the notch signaling pathway.</title>
        <authorList>
            <person name="Krebs L.T."/>
            <person name="Deftos M.L."/>
            <person name="Bevan M.J."/>
            <person name="Gridley T."/>
        </authorList>
    </citation>
    <scope>NUCLEOTIDE SEQUENCE [MRNA] (ISOFORM 1)</scope>
    <scope>FUNCTION</scope>
    <scope>INDUCTION</scope>
    <scope>TISSUE SPECIFICITY</scope>
    <scope>DEVELOPMENTAL STAGE</scope>
    <source>
        <strain>AKR/J</strain>
    </source>
</reference>
<reference key="2">
    <citation type="journal article" date="2005" name="Science">
        <title>The transcriptional landscape of the mammalian genome.</title>
        <authorList>
            <person name="Carninci P."/>
            <person name="Kasukawa T."/>
            <person name="Katayama S."/>
            <person name="Gough J."/>
            <person name="Frith M.C."/>
            <person name="Maeda N."/>
            <person name="Oyama R."/>
            <person name="Ravasi T."/>
            <person name="Lenhard B."/>
            <person name="Wells C."/>
            <person name="Kodzius R."/>
            <person name="Shimokawa K."/>
            <person name="Bajic V.B."/>
            <person name="Brenner S.E."/>
            <person name="Batalov S."/>
            <person name="Forrest A.R."/>
            <person name="Zavolan M."/>
            <person name="Davis M.J."/>
            <person name="Wilming L.G."/>
            <person name="Aidinis V."/>
            <person name="Allen J.E."/>
            <person name="Ambesi-Impiombato A."/>
            <person name="Apweiler R."/>
            <person name="Aturaliya R.N."/>
            <person name="Bailey T.L."/>
            <person name="Bansal M."/>
            <person name="Baxter L."/>
            <person name="Beisel K.W."/>
            <person name="Bersano T."/>
            <person name="Bono H."/>
            <person name="Chalk A.M."/>
            <person name="Chiu K.P."/>
            <person name="Choudhary V."/>
            <person name="Christoffels A."/>
            <person name="Clutterbuck D.R."/>
            <person name="Crowe M.L."/>
            <person name="Dalla E."/>
            <person name="Dalrymple B.P."/>
            <person name="de Bono B."/>
            <person name="Della Gatta G."/>
            <person name="di Bernardo D."/>
            <person name="Down T."/>
            <person name="Engstrom P."/>
            <person name="Fagiolini M."/>
            <person name="Faulkner G."/>
            <person name="Fletcher C.F."/>
            <person name="Fukushima T."/>
            <person name="Furuno M."/>
            <person name="Futaki S."/>
            <person name="Gariboldi M."/>
            <person name="Georgii-Hemming P."/>
            <person name="Gingeras T.R."/>
            <person name="Gojobori T."/>
            <person name="Green R.E."/>
            <person name="Gustincich S."/>
            <person name="Harbers M."/>
            <person name="Hayashi Y."/>
            <person name="Hensch T.K."/>
            <person name="Hirokawa N."/>
            <person name="Hill D."/>
            <person name="Huminiecki L."/>
            <person name="Iacono M."/>
            <person name="Ikeo K."/>
            <person name="Iwama A."/>
            <person name="Ishikawa T."/>
            <person name="Jakt M."/>
            <person name="Kanapin A."/>
            <person name="Katoh M."/>
            <person name="Kawasawa Y."/>
            <person name="Kelso J."/>
            <person name="Kitamura H."/>
            <person name="Kitano H."/>
            <person name="Kollias G."/>
            <person name="Krishnan S.P."/>
            <person name="Kruger A."/>
            <person name="Kummerfeld S.K."/>
            <person name="Kurochkin I.V."/>
            <person name="Lareau L.F."/>
            <person name="Lazarevic D."/>
            <person name="Lipovich L."/>
            <person name="Liu J."/>
            <person name="Liuni S."/>
            <person name="McWilliam S."/>
            <person name="Madan Babu M."/>
            <person name="Madera M."/>
            <person name="Marchionni L."/>
            <person name="Matsuda H."/>
            <person name="Matsuzawa S."/>
            <person name="Miki H."/>
            <person name="Mignone F."/>
            <person name="Miyake S."/>
            <person name="Morris K."/>
            <person name="Mottagui-Tabar S."/>
            <person name="Mulder N."/>
            <person name="Nakano N."/>
            <person name="Nakauchi H."/>
            <person name="Ng P."/>
            <person name="Nilsson R."/>
            <person name="Nishiguchi S."/>
            <person name="Nishikawa S."/>
            <person name="Nori F."/>
            <person name="Ohara O."/>
            <person name="Okazaki Y."/>
            <person name="Orlando V."/>
            <person name="Pang K.C."/>
            <person name="Pavan W.J."/>
            <person name="Pavesi G."/>
            <person name="Pesole G."/>
            <person name="Petrovsky N."/>
            <person name="Piazza S."/>
            <person name="Reed J."/>
            <person name="Reid J.F."/>
            <person name="Ring B.Z."/>
            <person name="Ringwald M."/>
            <person name="Rost B."/>
            <person name="Ruan Y."/>
            <person name="Salzberg S.L."/>
            <person name="Sandelin A."/>
            <person name="Schneider C."/>
            <person name="Schoenbach C."/>
            <person name="Sekiguchi K."/>
            <person name="Semple C.A."/>
            <person name="Seno S."/>
            <person name="Sessa L."/>
            <person name="Sheng Y."/>
            <person name="Shibata Y."/>
            <person name="Shimada H."/>
            <person name="Shimada K."/>
            <person name="Silva D."/>
            <person name="Sinclair B."/>
            <person name="Sperling S."/>
            <person name="Stupka E."/>
            <person name="Sugiura K."/>
            <person name="Sultana R."/>
            <person name="Takenaka Y."/>
            <person name="Taki K."/>
            <person name="Tammoja K."/>
            <person name="Tan S.L."/>
            <person name="Tang S."/>
            <person name="Taylor M.S."/>
            <person name="Tegner J."/>
            <person name="Teichmann S.A."/>
            <person name="Ueda H.R."/>
            <person name="van Nimwegen E."/>
            <person name="Verardo R."/>
            <person name="Wei C.L."/>
            <person name="Yagi K."/>
            <person name="Yamanishi H."/>
            <person name="Zabarovsky E."/>
            <person name="Zhu S."/>
            <person name="Zimmer A."/>
            <person name="Hide W."/>
            <person name="Bult C."/>
            <person name="Grimmond S.M."/>
            <person name="Teasdale R.D."/>
            <person name="Liu E.T."/>
            <person name="Brusic V."/>
            <person name="Quackenbush J."/>
            <person name="Wahlestedt C."/>
            <person name="Mattick J.S."/>
            <person name="Hume D.A."/>
            <person name="Kai C."/>
            <person name="Sasaki D."/>
            <person name="Tomaru Y."/>
            <person name="Fukuda S."/>
            <person name="Kanamori-Katayama M."/>
            <person name="Suzuki M."/>
            <person name="Aoki J."/>
            <person name="Arakawa T."/>
            <person name="Iida J."/>
            <person name="Imamura K."/>
            <person name="Itoh M."/>
            <person name="Kato T."/>
            <person name="Kawaji H."/>
            <person name="Kawagashira N."/>
            <person name="Kawashima T."/>
            <person name="Kojima M."/>
            <person name="Kondo S."/>
            <person name="Konno H."/>
            <person name="Nakano K."/>
            <person name="Ninomiya N."/>
            <person name="Nishio T."/>
            <person name="Okada M."/>
            <person name="Plessy C."/>
            <person name="Shibata K."/>
            <person name="Shiraki T."/>
            <person name="Suzuki S."/>
            <person name="Tagami M."/>
            <person name="Waki K."/>
            <person name="Watahiki A."/>
            <person name="Okamura-Oho Y."/>
            <person name="Suzuki H."/>
            <person name="Kawai J."/>
            <person name="Hayashizaki Y."/>
        </authorList>
    </citation>
    <scope>NUCLEOTIDE SEQUENCE [LARGE SCALE MRNA] (ISOFORM 1)</scope>
    <source>
        <strain>C57BL/6J</strain>
    </source>
</reference>
<reference key="3">
    <citation type="journal article" date="2009" name="PLoS Biol.">
        <title>Lineage-specific biology revealed by a finished genome assembly of the mouse.</title>
        <authorList>
            <person name="Church D.M."/>
            <person name="Goodstadt L."/>
            <person name="Hillier L.W."/>
            <person name="Zody M.C."/>
            <person name="Goldstein S."/>
            <person name="She X."/>
            <person name="Bult C.J."/>
            <person name="Agarwala R."/>
            <person name="Cherry J.L."/>
            <person name="DiCuccio M."/>
            <person name="Hlavina W."/>
            <person name="Kapustin Y."/>
            <person name="Meric P."/>
            <person name="Maglott D."/>
            <person name="Birtle Z."/>
            <person name="Marques A.C."/>
            <person name="Graves T."/>
            <person name="Zhou S."/>
            <person name="Teague B."/>
            <person name="Potamousis K."/>
            <person name="Churas C."/>
            <person name="Place M."/>
            <person name="Herschleb J."/>
            <person name="Runnheim R."/>
            <person name="Forrest D."/>
            <person name="Amos-Landgraf J."/>
            <person name="Schwartz D.C."/>
            <person name="Cheng Z."/>
            <person name="Lindblad-Toh K."/>
            <person name="Eichler E.E."/>
            <person name="Ponting C.P."/>
        </authorList>
    </citation>
    <scope>NUCLEOTIDE SEQUENCE [LARGE SCALE GENOMIC DNA]</scope>
    <source>
        <strain>C57BL/6J</strain>
    </source>
</reference>
<reference key="4">
    <citation type="journal article" date="2004" name="Genome Res.">
        <title>The status, quality, and expansion of the NIH full-length cDNA project: the Mammalian Gene Collection (MGC).</title>
        <authorList>
            <consortium name="The MGC Project Team"/>
        </authorList>
    </citation>
    <scope>NUCLEOTIDE SEQUENCE [LARGE SCALE MRNA] (ISOFORMS 1 AND 2)</scope>
    <source>
        <strain>FVB/N-3</strain>
        <tissue>Mammary tumor</tissue>
    </source>
</reference>
<reference key="5">
    <citation type="journal article" date="2009" name="Dev. Biol.">
        <title>Cyclical expression of the Notch/Wnt regulator Nrarp requires modulation by Dll3 in somitogenesis.</title>
        <authorList>
            <person name="Sewell W."/>
            <person name="Sparrow D.B."/>
            <person name="Smith A.J."/>
            <person name="Gonzalez D.M."/>
            <person name="Rappaport E.F."/>
            <person name="Dunwoodie S.L."/>
            <person name="Kusumi K."/>
        </authorList>
    </citation>
    <scope>DEVELOPMENTAL STAGE</scope>
</reference>
<reference key="6">
    <citation type="journal article" date="2009" name="Dev. Cell">
        <title>Nrarp coordinates endothelial Notch and Wnt signaling to control vessel density in angiogenesis.</title>
        <authorList>
            <person name="Phng L.K."/>
            <person name="Potente M."/>
            <person name="Leslie J.D."/>
            <person name="Babbage J."/>
            <person name="Nyqvist D."/>
            <person name="Lobov I."/>
            <person name="Ondr J.K."/>
            <person name="Rao S."/>
            <person name="Lang R.A."/>
            <person name="Thurston G."/>
            <person name="Gerhardt H."/>
        </authorList>
    </citation>
    <scope>FUNCTION</scope>
    <scope>TISSUE SPECIFICITY</scope>
    <scope>DEVELOPMENTAL STAGE</scope>
    <scope>DISRUPTION PHENOTYPE</scope>
    <scope>INTERACTION WITH LEF1</scope>
</reference>
<reference key="7">
    <citation type="journal article" date="2011" name="Mol. Biol. Cell">
        <title>The period of the somite segmentation clock is sensitive to Notch activity.</title>
        <authorList>
            <person name="Kim W."/>
            <person name="Matsui T."/>
            <person name="Yamao M."/>
            <person name="Ishibashi M."/>
            <person name="Tamada K."/>
            <person name="Takumi T."/>
            <person name="Kohno K."/>
            <person name="Oba S."/>
            <person name="Ishii S."/>
            <person name="Sakumura Y."/>
            <person name="Bessho Y."/>
        </authorList>
    </citation>
    <scope>FUNCTION</scope>
    <scope>DISRUPTION PHENOTYPE</scope>
</reference>
<reference key="8">
    <citation type="journal article" date="2012" name="Genesis">
        <title>The Notch-regulated ankyrin repeat protein is required for proper anterior-posterior somite patterning in mice.</title>
        <authorList>
            <person name="Krebs L.T."/>
            <person name="Bradley C.K."/>
            <person name="Norton C.R."/>
            <person name="Xu J."/>
            <person name="Oram K.F."/>
            <person name="Starling C."/>
            <person name="Deftos M.L."/>
            <person name="Bevan M.J."/>
            <person name="Gridley T."/>
        </authorList>
    </citation>
    <scope>FUNCTION</scope>
    <scope>DISRUPTION PHENOTYPE</scope>
</reference>
<reference key="9">
    <citation type="journal article" date="2013" name="PLoS ONE">
        <title>Dynamics of Notch pathway expression during mouse testis post-natal development and along the spermatogenic cycle.</title>
        <authorList>
            <person name="Murta D."/>
            <person name="Batista M."/>
            <person name="Silva E."/>
            <person name="Trindade A."/>
            <person name="Henrique D."/>
            <person name="Duarte A."/>
            <person name="Lopes-da-Costa L."/>
        </authorList>
    </citation>
    <scope>TISSUE SPECIFICITY</scope>
</reference>